<comment type="function">
    <text evidence="1 5">Histone demethylase required for brain development. Specifically demethylates dimethylated 'Lys-9' and 'Lys-27' (H3K9me2 and H3K27me2, respectively) of histone H3 and monomethylated histone H4 'Lys-20' residue (H4K20Me1), thereby playing a central role in histone code (By similarity).</text>
</comment>
<comment type="cofactor">
    <cofactor evidence="1">
        <name>Fe(2+)</name>
        <dbReference type="ChEBI" id="CHEBI:29033"/>
    </cofactor>
    <text evidence="1">Binds 1 Fe(2+) ion per subunit.</text>
</comment>
<comment type="subcellular location">
    <subcellularLocation>
        <location evidence="1">Nucleus</location>
    </subcellularLocation>
</comment>
<comment type="tissue specificity">
    <text evidence="5">Predominantly expressed in brain.</text>
</comment>
<comment type="domain">
    <text evidence="1">The PHD-type zinc finger mediates the binding to H3K4me3. Binding to H3K4me3 prevents its access to H3K9me2 (By similarity).</text>
</comment>
<comment type="similarity">
    <text evidence="6">Belongs to the JHDM1 histone demethylase family. JHDM1D subfamily.</text>
</comment>
<comment type="sequence caution" evidence="6">
    <conflict type="miscellaneous discrepancy">
        <sequence resource="EMBL-CDS" id="AAI42783"/>
    </conflict>
    <text>Contaminating sequence. Potential poly-A sequence.</text>
</comment>
<comment type="sequence caution" evidence="6">
    <conflict type="erroneous gene model prediction">
        <sequence resource="EMBL-CDS" id="CAI12074"/>
    </conflict>
</comment>
<organism>
    <name type="scientific">Danio rerio</name>
    <name type="common">Zebrafish</name>
    <name type="synonym">Brachydanio rerio</name>
    <dbReference type="NCBI Taxonomy" id="7955"/>
    <lineage>
        <taxon>Eukaryota</taxon>
        <taxon>Metazoa</taxon>
        <taxon>Chordata</taxon>
        <taxon>Craniata</taxon>
        <taxon>Vertebrata</taxon>
        <taxon>Euteleostomi</taxon>
        <taxon>Actinopterygii</taxon>
        <taxon>Neopterygii</taxon>
        <taxon>Teleostei</taxon>
        <taxon>Ostariophysi</taxon>
        <taxon>Cypriniformes</taxon>
        <taxon>Danionidae</taxon>
        <taxon>Danioninae</taxon>
        <taxon>Danio</taxon>
    </lineage>
</organism>
<protein>
    <recommendedName>
        <fullName>Lysine-specific demethylase 7A</fullName>
        <shortName>DrKDM7a</shortName>
        <ecNumber>1.14.11.-</ecNumber>
    </recommendedName>
    <alternativeName>
        <fullName>JmjC domain-containing histone demethylation protein 1D-A</fullName>
    </alternativeName>
</protein>
<evidence type="ECO:0000250" key="1"/>
<evidence type="ECO:0000255" key="2">
    <source>
        <dbReference type="PROSITE-ProRule" id="PRU00146"/>
    </source>
</evidence>
<evidence type="ECO:0000255" key="3">
    <source>
        <dbReference type="PROSITE-ProRule" id="PRU00538"/>
    </source>
</evidence>
<evidence type="ECO:0000256" key="4">
    <source>
        <dbReference type="SAM" id="MobiDB-lite"/>
    </source>
</evidence>
<evidence type="ECO:0000269" key="5">
    <source>
    </source>
</evidence>
<evidence type="ECO:0000305" key="6"/>
<proteinExistence type="evidence at transcript level"/>
<reference key="1">
    <citation type="journal article" date="2013" name="Nature">
        <title>The zebrafish reference genome sequence and its relationship to the human genome.</title>
        <authorList>
            <person name="Howe K."/>
            <person name="Clark M.D."/>
            <person name="Torroja C.F."/>
            <person name="Torrance J."/>
            <person name="Berthelot C."/>
            <person name="Muffato M."/>
            <person name="Collins J.E."/>
            <person name="Humphray S."/>
            <person name="McLaren K."/>
            <person name="Matthews L."/>
            <person name="McLaren S."/>
            <person name="Sealy I."/>
            <person name="Caccamo M."/>
            <person name="Churcher C."/>
            <person name="Scott C."/>
            <person name="Barrett J.C."/>
            <person name="Koch R."/>
            <person name="Rauch G.J."/>
            <person name="White S."/>
            <person name="Chow W."/>
            <person name="Kilian B."/>
            <person name="Quintais L.T."/>
            <person name="Guerra-Assuncao J.A."/>
            <person name="Zhou Y."/>
            <person name="Gu Y."/>
            <person name="Yen J."/>
            <person name="Vogel J.H."/>
            <person name="Eyre T."/>
            <person name="Redmond S."/>
            <person name="Banerjee R."/>
            <person name="Chi J."/>
            <person name="Fu B."/>
            <person name="Langley E."/>
            <person name="Maguire S.F."/>
            <person name="Laird G.K."/>
            <person name="Lloyd D."/>
            <person name="Kenyon E."/>
            <person name="Donaldson S."/>
            <person name="Sehra H."/>
            <person name="Almeida-King J."/>
            <person name="Loveland J."/>
            <person name="Trevanion S."/>
            <person name="Jones M."/>
            <person name="Quail M."/>
            <person name="Willey D."/>
            <person name="Hunt A."/>
            <person name="Burton J."/>
            <person name="Sims S."/>
            <person name="McLay K."/>
            <person name="Plumb B."/>
            <person name="Davis J."/>
            <person name="Clee C."/>
            <person name="Oliver K."/>
            <person name="Clark R."/>
            <person name="Riddle C."/>
            <person name="Elliot D."/>
            <person name="Threadgold G."/>
            <person name="Harden G."/>
            <person name="Ware D."/>
            <person name="Begum S."/>
            <person name="Mortimore B."/>
            <person name="Kerry G."/>
            <person name="Heath P."/>
            <person name="Phillimore B."/>
            <person name="Tracey A."/>
            <person name="Corby N."/>
            <person name="Dunn M."/>
            <person name="Johnson C."/>
            <person name="Wood J."/>
            <person name="Clark S."/>
            <person name="Pelan S."/>
            <person name="Griffiths G."/>
            <person name="Smith M."/>
            <person name="Glithero R."/>
            <person name="Howden P."/>
            <person name="Barker N."/>
            <person name="Lloyd C."/>
            <person name="Stevens C."/>
            <person name="Harley J."/>
            <person name="Holt K."/>
            <person name="Panagiotidis G."/>
            <person name="Lovell J."/>
            <person name="Beasley H."/>
            <person name="Henderson C."/>
            <person name="Gordon D."/>
            <person name="Auger K."/>
            <person name="Wright D."/>
            <person name="Collins J."/>
            <person name="Raisen C."/>
            <person name="Dyer L."/>
            <person name="Leung K."/>
            <person name="Robertson L."/>
            <person name="Ambridge K."/>
            <person name="Leongamornlert D."/>
            <person name="McGuire S."/>
            <person name="Gilderthorp R."/>
            <person name="Griffiths C."/>
            <person name="Manthravadi D."/>
            <person name="Nichol S."/>
            <person name="Barker G."/>
            <person name="Whitehead S."/>
            <person name="Kay M."/>
            <person name="Brown J."/>
            <person name="Murnane C."/>
            <person name="Gray E."/>
            <person name="Humphries M."/>
            <person name="Sycamore N."/>
            <person name="Barker D."/>
            <person name="Saunders D."/>
            <person name="Wallis J."/>
            <person name="Babbage A."/>
            <person name="Hammond S."/>
            <person name="Mashreghi-Mohammadi M."/>
            <person name="Barr L."/>
            <person name="Martin S."/>
            <person name="Wray P."/>
            <person name="Ellington A."/>
            <person name="Matthews N."/>
            <person name="Ellwood M."/>
            <person name="Woodmansey R."/>
            <person name="Clark G."/>
            <person name="Cooper J."/>
            <person name="Tromans A."/>
            <person name="Grafham D."/>
            <person name="Skuce C."/>
            <person name="Pandian R."/>
            <person name="Andrews R."/>
            <person name="Harrison E."/>
            <person name="Kimberley A."/>
            <person name="Garnett J."/>
            <person name="Fosker N."/>
            <person name="Hall R."/>
            <person name="Garner P."/>
            <person name="Kelly D."/>
            <person name="Bird C."/>
            <person name="Palmer S."/>
            <person name="Gehring I."/>
            <person name="Berger A."/>
            <person name="Dooley C.M."/>
            <person name="Ersan-Urun Z."/>
            <person name="Eser C."/>
            <person name="Geiger H."/>
            <person name="Geisler M."/>
            <person name="Karotki L."/>
            <person name="Kirn A."/>
            <person name="Konantz J."/>
            <person name="Konantz M."/>
            <person name="Oberlander M."/>
            <person name="Rudolph-Geiger S."/>
            <person name="Teucke M."/>
            <person name="Lanz C."/>
            <person name="Raddatz G."/>
            <person name="Osoegawa K."/>
            <person name="Zhu B."/>
            <person name="Rapp A."/>
            <person name="Widaa S."/>
            <person name="Langford C."/>
            <person name="Yang F."/>
            <person name="Schuster S.C."/>
            <person name="Carter N.P."/>
            <person name="Harrow J."/>
            <person name="Ning Z."/>
            <person name="Herrero J."/>
            <person name="Searle S.M."/>
            <person name="Enright A."/>
            <person name="Geisler R."/>
            <person name="Plasterk R.H."/>
            <person name="Lee C."/>
            <person name="Westerfield M."/>
            <person name="de Jong P.J."/>
            <person name="Zon L.I."/>
            <person name="Postlethwait J.H."/>
            <person name="Nusslein-Volhard C."/>
            <person name="Hubbard T.J."/>
            <person name="Roest Crollius H."/>
            <person name="Rogers J."/>
            <person name="Stemple D.L."/>
        </authorList>
    </citation>
    <scope>NUCLEOTIDE SEQUENCE [LARGE SCALE GENOMIC DNA]</scope>
    <source>
        <strain>Tuebingen</strain>
    </source>
</reference>
<reference key="2">
    <citation type="submission" date="2007-06" db="EMBL/GenBank/DDBJ databases">
        <authorList>
            <consortium name="NIH - Zebrafish Gene Collection (ZGC) project"/>
        </authorList>
    </citation>
    <scope>NUCLEOTIDE SEQUENCE [LARGE SCALE MRNA] OF 1-611</scope>
    <source>
        <tissue>Intestine</tissue>
    </source>
</reference>
<reference key="3">
    <citation type="journal article" date="2010" name="Genes Dev.">
        <title>KDM7 is a dual demethylase for histone H3 Lys 9 and Lys 27 and functions in brain development.</title>
        <authorList>
            <person name="Tsukada Y."/>
            <person name="Ishitani T."/>
            <person name="Nakayama K.I."/>
        </authorList>
    </citation>
    <scope>FUNCTION</scope>
    <scope>TISSUE SPECIFICITY</scope>
</reference>
<keyword id="KW-0156">Chromatin regulator</keyword>
<keyword id="KW-0223">Dioxygenase</keyword>
<keyword id="KW-0408">Iron</keyword>
<keyword id="KW-0479">Metal-binding</keyword>
<keyword id="KW-0524">Neurogenesis</keyword>
<keyword id="KW-0539">Nucleus</keyword>
<keyword id="KW-0560">Oxidoreductase</keyword>
<keyword id="KW-1185">Reference proteome</keyword>
<keyword id="KW-0804">Transcription</keyword>
<keyword id="KW-0805">Transcription regulation</keyword>
<keyword id="KW-0862">Zinc</keyword>
<keyword id="KW-0863">Zinc-finger</keyword>
<gene>
    <name type="primary">kdm7a</name>
    <name type="synonym">jhdm1da</name>
    <name type="synonym">kdm7</name>
    <name type="ORF">si:dkey-105o6.2</name>
</gene>
<dbReference type="EC" id="1.14.11.-"/>
<dbReference type="EMBL" id="BX537168">
    <property type="protein sequence ID" value="CAI12074.1"/>
    <property type="status" value="ALT_SEQ"/>
    <property type="molecule type" value="Genomic_DNA"/>
</dbReference>
<dbReference type="EMBL" id="BC142782">
    <property type="protein sequence ID" value="AAI42783.1"/>
    <property type="status" value="ALT_SEQ"/>
    <property type="molecule type" value="mRNA"/>
</dbReference>
<dbReference type="SMR" id="Q5RHD1"/>
<dbReference type="FunCoup" id="Q5RHD1">
    <property type="interactions" value="366"/>
</dbReference>
<dbReference type="STRING" id="7955.ENSDARP00000111845"/>
<dbReference type="PaxDb" id="7955-ENSDARP00000104491"/>
<dbReference type="Ensembl" id="ENSDART00000130409">
    <property type="protein sequence ID" value="ENSDARP00000104491"/>
    <property type="gene ID" value="ENSDARG00000018111"/>
</dbReference>
<dbReference type="AGR" id="ZFIN:ZDB-GENE-030131-9829"/>
<dbReference type="ZFIN" id="ZDB-GENE-030131-9829">
    <property type="gene designation" value="kdm7aa"/>
</dbReference>
<dbReference type="eggNOG" id="KOG1633">
    <property type="taxonomic scope" value="Eukaryota"/>
</dbReference>
<dbReference type="InParanoid" id="Q5RHD1"/>
<dbReference type="OMA" id="RDERCHT"/>
<dbReference type="OrthoDB" id="5876800at2759"/>
<dbReference type="PhylomeDB" id="Q5RHD1"/>
<dbReference type="TreeFam" id="TF106480"/>
<dbReference type="PRO" id="PR:Q5RHD1"/>
<dbReference type="Proteomes" id="UP000000437">
    <property type="component" value="Unplaced"/>
</dbReference>
<dbReference type="Bgee" id="ENSDARG00000018111">
    <property type="expression patterns" value="Expressed in testis and 37 other cell types or tissues"/>
</dbReference>
<dbReference type="ExpressionAtlas" id="Q5RHD1">
    <property type="expression patterns" value="baseline and differential"/>
</dbReference>
<dbReference type="GO" id="GO:0005634">
    <property type="term" value="C:nucleus"/>
    <property type="evidence" value="ECO:0007669"/>
    <property type="project" value="UniProtKB-SubCell"/>
</dbReference>
<dbReference type="GO" id="GO:0016706">
    <property type="term" value="F:2-oxoglutarate-dependent dioxygenase activity"/>
    <property type="evidence" value="ECO:0000250"/>
    <property type="project" value="UniProtKB"/>
</dbReference>
<dbReference type="GO" id="GO:0032452">
    <property type="term" value="F:histone demethylase activity"/>
    <property type="evidence" value="ECO:0000318"/>
    <property type="project" value="GO_Central"/>
</dbReference>
<dbReference type="GO" id="GO:0071558">
    <property type="term" value="F:histone H3K27me2/H3K27me3 demethylase activity"/>
    <property type="evidence" value="ECO:0000314"/>
    <property type="project" value="ZFIN"/>
</dbReference>
<dbReference type="GO" id="GO:0051864">
    <property type="term" value="F:histone H3K36 demethylase activity"/>
    <property type="evidence" value="ECO:0000250"/>
    <property type="project" value="UniProtKB"/>
</dbReference>
<dbReference type="GO" id="GO:0032454">
    <property type="term" value="F:histone H3K9 demethylase activity"/>
    <property type="evidence" value="ECO:0000314"/>
    <property type="project" value="ZFIN"/>
</dbReference>
<dbReference type="GO" id="GO:0035575">
    <property type="term" value="F:histone H4K20 demethylase activity"/>
    <property type="evidence" value="ECO:0000250"/>
    <property type="project" value="UniProtKB"/>
</dbReference>
<dbReference type="GO" id="GO:0003712">
    <property type="term" value="F:transcription coregulator activity"/>
    <property type="evidence" value="ECO:0000318"/>
    <property type="project" value="GO_Central"/>
</dbReference>
<dbReference type="GO" id="GO:0008270">
    <property type="term" value="F:zinc ion binding"/>
    <property type="evidence" value="ECO:0007669"/>
    <property type="project" value="UniProtKB-KW"/>
</dbReference>
<dbReference type="GO" id="GO:0006338">
    <property type="term" value="P:chromatin remodeling"/>
    <property type="evidence" value="ECO:0000318"/>
    <property type="project" value="GO_Central"/>
</dbReference>
<dbReference type="GO" id="GO:0030901">
    <property type="term" value="P:midbrain development"/>
    <property type="evidence" value="ECO:0000315"/>
    <property type="project" value="UniProtKB"/>
</dbReference>
<dbReference type="GO" id="GO:0006357">
    <property type="term" value="P:regulation of transcription by RNA polymerase II"/>
    <property type="evidence" value="ECO:0000318"/>
    <property type="project" value="GO_Central"/>
</dbReference>
<dbReference type="CDD" id="cd15640">
    <property type="entry name" value="PHD_KDM7"/>
    <property type="match status" value="1"/>
</dbReference>
<dbReference type="FunFam" id="1.20.58.1360:FF:000003">
    <property type="entry name" value="Lysine-specific demethylase 7A"/>
    <property type="match status" value="1"/>
</dbReference>
<dbReference type="FunFam" id="3.30.40.10:FF:000193">
    <property type="entry name" value="lysine-specific demethylase PHF2 isoform X1"/>
    <property type="match status" value="1"/>
</dbReference>
<dbReference type="Gene3D" id="1.20.58.1360">
    <property type="match status" value="1"/>
</dbReference>
<dbReference type="Gene3D" id="2.60.120.650">
    <property type="entry name" value="Cupin"/>
    <property type="match status" value="1"/>
</dbReference>
<dbReference type="InterPro" id="IPR041070">
    <property type="entry name" value="JHD"/>
</dbReference>
<dbReference type="InterPro" id="IPR050690">
    <property type="entry name" value="JHDM1_Histone_Demethylase"/>
</dbReference>
<dbReference type="InterPro" id="IPR003347">
    <property type="entry name" value="JmjC_dom"/>
</dbReference>
<dbReference type="InterPro" id="IPR019786">
    <property type="entry name" value="Zinc_finger_PHD-type_CS"/>
</dbReference>
<dbReference type="InterPro" id="IPR011011">
    <property type="entry name" value="Znf_FYVE_PHD"/>
</dbReference>
<dbReference type="InterPro" id="IPR001965">
    <property type="entry name" value="Znf_PHD"/>
</dbReference>
<dbReference type="InterPro" id="IPR019787">
    <property type="entry name" value="Znf_PHD-finger"/>
</dbReference>
<dbReference type="PANTHER" id="PTHR23123">
    <property type="entry name" value="PHD/F-BOX CONTAINING PROTEIN"/>
    <property type="match status" value="1"/>
</dbReference>
<dbReference type="Pfam" id="PF17811">
    <property type="entry name" value="JHD"/>
    <property type="match status" value="1"/>
</dbReference>
<dbReference type="Pfam" id="PF02373">
    <property type="entry name" value="JmjC"/>
    <property type="match status" value="1"/>
</dbReference>
<dbReference type="Pfam" id="PF00628">
    <property type="entry name" value="PHD"/>
    <property type="match status" value="1"/>
</dbReference>
<dbReference type="SMART" id="SM00558">
    <property type="entry name" value="JmjC"/>
    <property type="match status" value="1"/>
</dbReference>
<dbReference type="SMART" id="SM00249">
    <property type="entry name" value="PHD"/>
    <property type="match status" value="1"/>
</dbReference>
<dbReference type="SUPFAM" id="SSF51197">
    <property type="entry name" value="Clavaminate synthase-like"/>
    <property type="match status" value="1"/>
</dbReference>
<dbReference type="SUPFAM" id="SSF57903">
    <property type="entry name" value="FYVE/PHD zinc finger"/>
    <property type="match status" value="1"/>
</dbReference>
<dbReference type="PROSITE" id="PS51184">
    <property type="entry name" value="JMJC"/>
    <property type="match status" value="1"/>
</dbReference>
<dbReference type="PROSITE" id="PS01359">
    <property type="entry name" value="ZF_PHD_1"/>
    <property type="match status" value="1"/>
</dbReference>
<dbReference type="PROSITE" id="PS50016">
    <property type="entry name" value="ZF_PHD_2"/>
    <property type="match status" value="1"/>
</dbReference>
<accession>Q5RHD1</accession>
<accession>A5PL83</accession>
<sequence>MAAAPLYCVCRQPYDVNRFMIECDICKDWFHGSCVQVVEHHAADIDVYHCPNCEPIHGPYMMKKHNNWHRHDYTEPNDGTRPVQAGTAVFVKELQARSFASGDILVQMQGNQVTKRFLEKEGFNYPIVVHDLDGLGLKLPPPSFSVSDVEHYVGANKVIDVIDVAKQADSKMKLGEFVKYYYQPERPKVLNVISLEFSDTRMSNLVVVPDIAQKMSWVENYWPDDSFFPKPFVQKYCLMGMKNSYTDFHIDFGGTSVWYHVLWGEKIFYLIKPTKANLALYEAWSSSPNQSEVFFGEKVDKCYKCVVKQGTTILLPTGWIHAVLTSQDSMAFGGNFLHNLNIDMQLRCYEMERRLKTPDLFKFPYFEAICWYVAKNLLETLKELRENKCEAQGFLVNGVKALISSLKMWLRRELTQPNSEVPDNIRPGHLIKALSKEIRHLEDDSNKAVKTQGSAECSLSRSTLEKGDQAQQAARRLQDHHHHRRRHHHHHHHHHHHHHHHHSRKLPSNLDVLELHTLEVLKRLEVGQLKEDSAFSSKVNGKFKKVCPVPAAAVEASHDNALRLVMCNGKIIRERMPITNVAATVNAVEMYHKHRIKLERIPMCPEEKVKKEKCEDEFGVQCTIKKPVSQGESVQTELRTESPHLASSDSDSKAGDSAEKCSLESESSDGEDGGSQRDSGTFVEHLNSHRHSHHKQALKRERPTSPNTDCAIQGMLSMAGLLCPQASGGAADILQQRWWASQGNGSSTSSSSDMWDSSEPCSAPRSPDAEDGSLGEEYSYRESSLSPPLHPSKRHAPNPTPVSNQATKGKRPKKGQATAKQRLGKILKMSRHKGLFLMKPMVFLIPQQGGTPLDPQFLLQSSSICVFPPPLIVSG</sequence>
<feature type="chain" id="PRO_0000394249" description="Lysine-specific demethylase 7A">
    <location>
        <begin position="1"/>
        <end position="875"/>
    </location>
</feature>
<feature type="domain" description="JmjC" evidence="3">
    <location>
        <begin position="197"/>
        <end position="353"/>
    </location>
</feature>
<feature type="zinc finger region" description="PHD-type" evidence="2">
    <location>
        <begin position="5"/>
        <end position="56"/>
    </location>
</feature>
<feature type="region of interest" description="Disordered" evidence="4">
    <location>
        <begin position="442"/>
        <end position="506"/>
    </location>
</feature>
<feature type="region of interest" description="Disordered" evidence="4">
    <location>
        <begin position="629"/>
        <end position="710"/>
    </location>
</feature>
<feature type="region of interest" description="Disordered" evidence="4">
    <location>
        <begin position="742"/>
        <end position="820"/>
    </location>
</feature>
<feature type="compositionally biased region" description="Polar residues" evidence="4">
    <location>
        <begin position="448"/>
        <end position="462"/>
    </location>
</feature>
<feature type="compositionally biased region" description="Basic residues" evidence="4">
    <location>
        <begin position="478"/>
        <end position="505"/>
    </location>
</feature>
<feature type="compositionally biased region" description="Basic and acidic residues" evidence="4">
    <location>
        <begin position="650"/>
        <end position="663"/>
    </location>
</feature>
<feature type="compositionally biased region" description="Basic residues" evidence="4">
    <location>
        <begin position="688"/>
        <end position="697"/>
    </location>
</feature>
<feature type="compositionally biased region" description="Low complexity" evidence="4">
    <location>
        <begin position="742"/>
        <end position="762"/>
    </location>
</feature>
<feature type="binding site" evidence="1">
    <location>
        <position position="246"/>
    </location>
    <ligand>
        <name>substrate</name>
    </ligand>
</feature>
<feature type="binding site" evidence="3">
    <location>
        <position position="249"/>
    </location>
    <ligand>
        <name>Fe cation</name>
        <dbReference type="ChEBI" id="CHEBI:24875"/>
        <note>catalytic</note>
    </ligand>
</feature>
<feature type="binding site" evidence="3">
    <location>
        <position position="251"/>
    </location>
    <ligand>
        <name>Fe cation</name>
        <dbReference type="ChEBI" id="CHEBI:24875"/>
        <note>catalytic</note>
    </ligand>
</feature>
<feature type="binding site" evidence="1">
    <location>
        <position position="266"/>
    </location>
    <ligand>
        <name>substrate</name>
    </ligand>
</feature>
<feature type="binding site" evidence="3">
    <location>
        <position position="321"/>
    </location>
    <ligand>
        <name>Fe cation</name>
        <dbReference type="ChEBI" id="CHEBI:24875"/>
        <note>catalytic</note>
    </ligand>
</feature>
<feature type="sequence conflict" description="In Ref. 2; AAI42783." evidence="6" ref="2">
    <original>Y</original>
    <variation>H</variation>
    <location>
        <position position="182"/>
    </location>
</feature>
<feature type="sequence conflict" description="In Ref. 2; AAI42783." evidence="6" ref="2">
    <original>S</original>
    <variation>R</variation>
    <location>
        <position position="454"/>
    </location>
</feature>
<feature type="sequence conflict" description="In Ref. 2; AAI42783." evidence="6" ref="2">
    <original>Q</original>
    <variation>K</variation>
    <location>
        <position position="471"/>
    </location>
</feature>
<feature type="sequence conflict" description="In Ref. 2; AAI42783." evidence="6" ref="2">
    <original>V</original>
    <variation>L</variation>
    <location>
        <position position="588"/>
    </location>
</feature>
<feature type="sequence conflict" description="In Ref. 2; AAI42783." evidence="6" ref="2">
    <original>I</original>
    <variation>M</variation>
    <location>
        <position position="596"/>
    </location>
</feature>
<name>KDM7A_DANRE</name>